<name>TIM14_EMENI</name>
<gene>
    <name type="primary">pam18</name>
    <name type="synonym">tim14</name>
    <name type="ORF">AN4559</name>
</gene>
<dbReference type="EMBL" id="AACD01000078">
    <property type="protein sequence ID" value="EAA60902.1"/>
    <property type="molecule type" value="Genomic_DNA"/>
</dbReference>
<dbReference type="EMBL" id="BN001303">
    <property type="protein sequence ID" value="CBF77258.1"/>
    <property type="molecule type" value="Genomic_DNA"/>
</dbReference>
<dbReference type="RefSeq" id="XP_662163.1">
    <property type="nucleotide sequence ID" value="XM_657071.1"/>
</dbReference>
<dbReference type="SMR" id="Q5B4H1"/>
<dbReference type="STRING" id="227321.Q5B4H1"/>
<dbReference type="EnsemblFungi" id="CBF77258">
    <property type="protein sequence ID" value="CBF77258"/>
    <property type="gene ID" value="ANIA_04559"/>
</dbReference>
<dbReference type="KEGG" id="ani:ANIA_04559"/>
<dbReference type="VEuPathDB" id="FungiDB:AN4559"/>
<dbReference type="eggNOG" id="KOG0723">
    <property type="taxonomic scope" value="Eukaryota"/>
</dbReference>
<dbReference type="HOGENOM" id="CLU_017633_13_3_1"/>
<dbReference type="InParanoid" id="Q5B4H1"/>
<dbReference type="OMA" id="EPRMNKR"/>
<dbReference type="OrthoDB" id="240298at2759"/>
<dbReference type="Proteomes" id="UP000000560">
    <property type="component" value="Chromosome III"/>
</dbReference>
<dbReference type="GO" id="GO:0001405">
    <property type="term" value="C:PAM complex, Tim23 associated import motor"/>
    <property type="evidence" value="ECO:0000318"/>
    <property type="project" value="GO_Central"/>
</dbReference>
<dbReference type="GO" id="GO:0001671">
    <property type="term" value="F:ATPase activator activity"/>
    <property type="evidence" value="ECO:0000318"/>
    <property type="project" value="GO_Central"/>
</dbReference>
<dbReference type="GO" id="GO:0030150">
    <property type="term" value="P:protein import into mitochondrial matrix"/>
    <property type="evidence" value="ECO:0000318"/>
    <property type="project" value="GO_Central"/>
</dbReference>
<dbReference type="CDD" id="cd06257">
    <property type="entry name" value="DnaJ"/>
    <property type="match status" value="1"/>
</dbReference>
<dbReference type="FunFam" id="1.10.287.110:FF:000001">
    <property type="entry name" value="Import inner membrane translocase subunit tim14"/>
    <property type="match status" value="1"/>
</dbReference>
<dbReference type="Gene3D" id="1.10.287.110">
    <property type="entry name" value="DnaJ domain"/>
    <property type="match status" value="1"/>
</dbReference>
<dbReference type="InterPro" id="IPR001623">
    <property type="entry name" value="DnaJ_domain"/>
</dbReference>
<dbReference type="InterPro" id="IPR036869">
    <property type="entry name" value="J_dom_sf"/>
</dbReference>
<dbReference type="PANTHER" id="PTHR12763">
    <property type="match status" value="1"/>
</dbReference>
<dbReference type="PANTHER" id="PTHR12763:SF28">
    <property type="entry name" value="GEO10507P1-RELATED"/>
    <property type="match status" value="1"/>
</dbReference>
<dbReference type="Pfam" id="PF03656">
    <property type="entry name" value="Pam16"/>
    <property type="match status" value="1"/>
</dbReference>
<dbReference type="SUPFAM" id="SSF46565">
    <property type="entry name" value="Chaperone J-domain"/>
    <property type="match status" value="1"/>
</dbReference>
<reference key="1">
    <citation type="journal article" date="2005" name="Nature">
        <title>Sequencing of Aspergillus nidulans and comparative analysis with A. fumigatus and A. oryzae.</title>
        <authorList>
            <person name="Galagan J.E."/>
            <person name="Calvo S.E."/>
            <person name="Cuomo C."/>
            <person name="Ma L.-J."/>
            <person name="Wortman J.R."/>
            <person name="Batzoglou S."/>
            <person name="Lee S.-I."/>
            <person name="Bastuerkmen M."/>
            <person name="Spevak C.C."/>
            <person name="Clutterbuck J."/>
            <person name="Kapitonov V."/>
            <person name="Jurka J."/>
            <person name="Scazzocchio C."/>
            <person name="Farman M.L."/>
            <person name="Butler J."/>
            <person name="Purcell S."/>
            <person name="Harris S."/>
            <person name="Braus G.H."/>
            <person name="Draht O."/>
            <person name="Busch S."/>
            <person name="D'Enfert C."/>
            <person name="Bouchier C."/>
            <person name="Goldman G.H."/>
            <person name="Bell-Pedersen D."/>
            <person name="Griffiths-Jones S."/>
            <person name="Doonan J.H."/>
            <person name="Yu J."/>
            <person name="Vienken K."/>
            <person name="Pain A."/>
            <person name="Freitag M."/>
            <person name="Selker E.U."/>
            <person name="Archer D.B."/>
            <person name="Penalva M.A."/>
            <person name="Oakley B.R."/>
            <person name="Momany M."/>
            <person name="Tanaka T."/>
            <person name="Kumagai T."/>
            <person name="Asai K."/>
            <person name="Machida M."/>
            <person name="Nierman W.C."/>
            <person name="Denning D.W."/>
            <person name="Caddick M.X."/>
            <person name="Hynes M."/>
            <person name="Paoletti M."/>
            <person name="Fischer R."/>
            <person name="Miller B.L."/>
            <person name="Dyer P.S."/>
            <person name="Sachs M.S."/>
            <person name="Osmani S.A."/>
            <person name="Birren B.W."/>
        </authorList>
    </citation>
    <scope>NUCLEOTIDE SEQUENCE [LARGE SCALE GENOMIC DNA]</scope>
    <source>
        <strain>FGSC A4 / ATCC 38163 / CBS 112.46 / NRRL 194 / M139</strain>
    </source>
</reference>
<reference key="2">
    <citation type="journal article" date="2009" name="Fungal Genet. Biol.">
        <title>The 2008 update of the Aspergillus nidulans genome annotation: a community effort.</title>
        <authorList>
            <person name="Wortman J.R."/>
            <person name="Gilsenan J.M."/>
            <person name="Joardar V."/>
            <person name="Deegan J."/>
            <person name="Clutterbuck J."/>
            <person name="Andersen M.R."/>
            <person name="Archer D."/>
            <person name="Bencina M."/>
            <person name="Braus G."/>
            <person name="Coutinho P."/>
            <person name="von Dohren H."/>
            <person name="Doonan J."/>
            <person name="Driessen A.J."/>
            <person name="Durek P."/>
            <person name="Espeso E."/>
            <person name="Fekete E."/>
            <person name="Flipphi M."/>
            <person name="Estrada C.G."/>
            <person name="Geysens S."/>
            <person name="Goldman G."/>
            <person name="de Groot P.W."/>
            <person name="Hansen K."/>
            <person name="Harris S.D."/>
            <person name="Heinekamp T."/>
            <person name="Helmstaedt K."/>
            <person name="Henrissat B."/>
            <person name="Hofmann G."/>
            <person name="Homan T."/>
            <person name="Horio T."/>
            <person name="Horiuchi H."/>
            <person name="James S."/>
            <person name="Jones M."/>
            <person name="Karaffa L."/>
            <person name="Karanyi Z."/>
            <person name="Kato M."/>
            <person name="Keller N."/>
            <person name="Kelly D.E."/>
            <person name="Kiel J.A."/>
            <person name="Kim J.M."/>
            <person name="van der Klei I.J."/>
            <person name="Klis F.M."/>
            <person name="Kovalchuk A."/>
            <person name="Krasevec N."/>
            <person name="Kubicek C.P."/>
            <person name="Liu B."/>
            <person name="Maccabe A."/>
            <person name="Meyer V."/>
            <person name="Mirabito P."/>
            <person name="Miskei M."/>
            <person name="Mos M."/>
            <person name="Mullins J."/>
            <person name="Nelson D.R."/>
            <person name="Nielsen J."/>
            <person name="Oakley B.R."/>
            <person name="Osmani S.A."/>
            <person name="Pakula T."/>
            <person name="Paszewski A."/>
            <person name="Paulsen I."/>
            <person name="Pilsyk S."/>
            <person name="Pocsi I."/>
            <person name="Punt P.J."/>
            <person name="Ram A.F."/>
            <person name="Ren Q."/>
            <person name="Robellet X."/>
            <person name="Robson G."/>
            <person name="Seiboth B."/>
            <person name="van Solingen P."/>
            <person name="Specht T."/>
            <person name="Sun J."/>
            <person name="Taheri-Talesh N."/>
            <person name="Takeshita N."/>
            <person name="Ussery D."/>
            <person name="vanKuyk P.A."/>
            <person name="Visser H."/>
            <person name="van de Vondervoort P.J."/>
            <person name="de Vries R.P."/>
            <person name="Walton J."/>
            <person name="Xiang X."/>
            <person name="Xiong Y."/>
            <person name="Zeng A.P."/>
            <person name="Brandt B.W."/>
            <person name="Cornell M.J."/>
            <person name="van den Hondel C.A."/>
            <person name="Visser J."/>
            <person name="Oliver S.G."/>
            <person name="Turner G."/>
        </authorList>
    </citation>
    <scope>GENOME REANNOTATION</scope>
    <source>
        <strain>FGSC A4 / ATCC 38163 / CBS 112.46 / NRRL 194 / M139</strain>
    </source>
</reference>
<keyword id="KW-0143">Chaperone</keyword>
<keyword id="KW-0472">Membrane</keyword>
<keyword id="KW-0496">Mitochondrion</keyword>
<keyword id="KW-0999">Mitochondrion inner membrane</keyword>
<keyword id="KW-0653">Protein transport</keyword>
<keyword id="KW-1185">Reference proteome</keyword>
<keyword id="KW-0811">Translocation</keyword>
<keyword id="KW-0812">Transmembrane</keyword>
<keyword id="KW-1133">Transmembrane helix</keyword>
<keyword id="KW-0813">Transport</keyword>
<protein>
    <recommendedName>
        <fullName>Mitochondrial import inner membrane translocase subunit tim14</fullName>
    </recommendedName>
    <alternativeName>
        <fullName>Presequence translocated-associated motor subunit pam18</fullName>
    </alternativeName>
</protein>
<evidence type="ECO:0000250" key="1"/>
<evidence type="ECO:0000255" key="2"/>
<evidence type="ECO:0000305" key="3"/>
<accession>Q5B4H1</accession>
<accession>C8V868</accession>
<comment type="function">
    <text evidence="1">Essential component of the PAM complex, a complex required for the translocation of transit peptide-containing proteins from the inner membrane into the mitochondrial matrix in an ATP-dependent manner. In the complex, it is required to stimulate activity of mtHSP70 (SSC1/sscA) (By similarity).</text>
</comment>
<comment type="subunit">
    <text evidence="1">Heterodimer with PAM16/pamP. Component of the PAM complex, at least composed of mtHsp70, MGE1/mgeA, tim44, PAM16/pamP, PAM17/pamQ and PAM18/pamR (By similarity).</text>
</comment>
<comment type="subcellular location">
    <subcellularLocation>
        <location evidence="1">Mitochondrion inner membrane</location>
        <topology evidence="1">Single-pass membrane protein</topology>
    </subcellularLocation>
</comment>
<comment type="domain">
    <text evidence="1">The J domain is essential for co-chaperone activity and mediates the heterodimerization with the J-like domain of PAM16.</text>
</comment>
<comment type="similarity">
    <text evidence="3">Belongs to the TIM14 family.</text>
</comment>
<proteinExistence type="inferred from homology"/>
<organism>
    <name type="scientific">Emericella nidulans (strain FGSC A4 / ATCC 38163 / CBS 112.46 / NRRL 194 / M139)</name>
    <name type="common">Aspergillus nidulans</name>
    <dbReference type="NCBI Taxonomy" id="227321"/>
    <lineage>
        <taxon>Eukaryota</taxon>
        <taxon>Fungi</taxon>
        <taxon>Dikarya</taxon>
        <taxon>Ascomycota</taxon>
        <taxon>Pezizomycotina</taxon>
        <taxon>Eurotiomycetes</taxon>
        <taxon>Eurotiomycetidae</taxon>
        <taxon>Eurotiales</taxon>
        <taxon>Aspergillaceae</taxon>
        <taxon>Aspergillus</taxon>
        <taxon>Aspergillus subgen. Nidulantes</taxon>
    </lineage>
</organism>
<sequence length="105" mass="11605">MASALTLGLGVATAAFLGRAGLVAYRRSKGGVNALGKAFYKGGFEPRMNRREAALILELPERTLNKEKVRKKHRQLMLLNHPDRGGSPYLATKINEAKEFLDKHT</sequence>
<feature type="chain" id="PRO_0000071112" description="Mitochondrial import inner membrane translocase subunit tim14">
    <location>
        <begin position="1"/>
        <end position="105"/>
    </location>
</feature>
<feature type="topological domain" description="Mitochondrial intermembrane" evidence="2">
    <location>
        <begin position="1"/>
        <end position="3"/>
    </location>
</feature>
<feature type="transmembrane region" description="Helical" evidence="2">
    <location>
        <begin position="4"/>
        <end position="23"/>
    </location>
</feature>
<feature type="topological domain" description="Mitochondrial matrix" evidence="2">
    <location>
        <begin position="24"/>
        <end position="105"/>
    </location>
</feature>
<feature type="domain" description="J">
    <location>
        <begin position="52"/>
        <end position="105"/>
    </location>
</feature>